<accession>Q3MHR2</accession>
<feature type="chain" id="PRO_0000295028" description="Deoxycytidine kinase">
    <location>
        <begin position="1"/>
        <end position="260"/>
    </location>
</feature>
<feature type="active site" description="Proton acceptor" evidence="3">
    <location>
        <position position="127"/>
    </location>
</feature>
<feature type="binding site" evidence="1">
    <location>
        <begin position="28"/>
        <end position="36"/>
    </location>
    <ligand>
        <name>ATP</name>
        <dbReference type="ChEBI" id="CHEBI:30616"/>
    </ligand>
</feature>
<feature type="binding site" evidence="1">
    <location>
        <position position="53"/>
    </location>
    <ligand>
        <name>substrate</name>
    </ligand>
</feature>
<feature type="binding site" evidence="1">
    <location>
        <position position="86"/>
    </location>
    <ligand>
        <name>substrate</name>
    </ligand>
</feature>
<feature type="binding site" evidence="1">
    <location>
        <position position="97"/>
    </location>
    <ligand>
        <name>substrate</name>
    </ligand>
</feature>
<feature type="binding site" evidence="1">
    <location>
        <position position="128"/>
    </location>
    <ligand>
        <name>substrate</name>
    </ligand>
</feature>
<feature type="binding site" evidence="1">
    <location>
        <position position="133"/>
    </location>
    <ligand>
        <name>substrate</name>
    </ligand>
</feature>
<feature type="binding site" evidence="1">
    <location>
        <begin position="188"/>
        <end position="192"/>
    </location>
    <ligand>
        <name>ATP</name>
        <dbReference type="ChEBI" id="CHEBI:30616"/>
    </ligand>
</feature>
<feature type="binding site" evidence="1">
    <location>
        <position position="197"/>
    </location>
    <ligand>
        <name>substrate</name>
    </ligand>
</feature>
<feature type="binding site" evidence="1">
    <location>
        <begin position="240"/>
        <end position="242"/>
    </location>
    <ligand>
        <name>ATP</name>
        <dbReference type="ChEBI" id="CHEBI:30616"/>
    </ligand>
</feature>
<feature type="modified residue" description="Phosphoserine; by CK1" evidence="2">
    <location>
        <position position="11"/>
    </location>
</feature>
<feature type="modified residue" description="Phosphoserine; by CK1" evidence="2">
    <location>
        <position position="15"/>
    </location>
</feature>
<feature type="modified residue" description="Phosphothreonine; by CK1" evidence="2">
    <location>
        <position position="72"/>
    </location>
</feature>
<feature type="modified residue" description="Phosphoserine; by CK1" evidence="2">
    <location>
        <position position="74"/>
    </location>
</feature>
<dbReference type="EC" id="2.7.1.74" evidence="2"/>
<dbReference type="EC" id="2.7.1.76" evidence="2"/>
<dbReference type="EC" id="2.7.1.113" evidence="2"/>
<dbReference type="EMBL" id="BC105141">
    <property type="protein sequence ID" value="AAI05142.1"/>
    <property type="molecule type" value="mRNA"/>
</dbReference>
<dbReference type="RefSeq" id="NP_001029745.1">
    <property type="nucleotide sequence ID" value="NM_001034573.1"/>
</dbReference>
<dbReference type="SMR" id="Q3MHR2"/>
<dbReference type="FunCoup" id="Q3MHR2">
    <property type="interactions" value="1161"/>
</dbReference>
<dbReference type="STRING" id="9913.ENSBTAP00000016449"/>
<dbReference type="PaxDb" id="9913-ENSBTAP00000016449"/>
<dbReference type="Ensembl" id="ENSBTAT00000016449.6">
    <property type="protein sequence ID" value="ENSBTAP00000016449.4"/>
    <property type="gene ID" value="ENSBTAG00000012397.6"/>
</dbReference>
<dbReference type="GeneID" id="530642"/>
<dbReference type="KEGG" id="bta:530642"/>
<dbReference type="CTD" id="1633"/>
<dbReference type="VEuPathDB" id="HostDB:ENSBTAG00000012397"/>
<dbReference type="VGNC" id="VGNC:27914">
    <property type="gene designation" value="DCK"/>
</dbReference>
<dbReference type="eggNOG" id="KOG4235">
    <property type="taxonomic scope" value="Eukaryota"/>
</dbReference>
<dbReference type="GeneTree" id="ENSGT00940000157321"/>
<dbReference type="HOGENOM" id="CLU_030466_1_1_1"/>
<dbReference type="InParanoid" id="Q3MHR2"/>
<dbReference type="OMA" id="EAMVMTP"/>
<dbReference type="OrthoDB" id="567086at2759"/>
<dbReference type="TreeFam" id="TF324413"/>
<dbReference type="Reactome" id="R-BTA-73614">
    <property type="pathway name" value="Pyrimidine salvage"/>
</dbReference>
<dbReference type="Reactome" id="R-BTA-74217">
    <property type="pathway name" value="Purine salvage"/>
</dbReference>
<dbReference type="Proteomes" id="UP000009136">
    <property type="component" value="Chromosome 6"/>
</dbReference>
<dbReference type="Bgee" id="ENSBTAG00000012397">
    <property type="expression patterns" value="Expressed in thymus and 105 other cell types or tissues"/>
</dbReference>
<dbReference type="GO" id="GO:0005737">
    <property type="term" value="C:cytoplasm"/>
    <property type="evidence" value="ECO:0000318"/>
    <property type="project" value="GO_Central"/>
</dbReference>
<dbReference type="GO" id="GO:0005739">
    <property type="term" value="C:mitochondrion"/>
    <property type="evidence" value="ECO:0000318"/>
    <property type="project" value="GO_Central"/>
</dbReference>
<dbReference type="GO" id="GO:0005654">
    <property type="term" value="C:nucleoplasm"/>
    <property type="evidence" value="ECO:0007669"/>
    <property type="project" value="Ensembl"/>
</dbReference>
<dbReference type="GO" id="GO:0005524">
    <property type="term" value="F:ATP binding"/>
    <property type="evidence" value="ECO:0007669"/>
    <property type="project" value="UniProtKB-KW"/>
</dbReference>
<dbReference type="GO" id="GO:0043771">
    <property type="term" value="F:cytidine kinase activity"/>
    <property type="evidence" value="ECO:0007669"/>
    <property type="project" value="Ensembl"/>
</dbReference>
<dbReference type="GO" id="GO:0004136">
    <property type="term" value="F:deoxyadenosine kinase activity"/>
    <property type="evidence" value="ECO:0007669"/>
    <property type="project" value="UniProtKB-EC"/>
</dbReference>
<dbReference type="GO" id="GO:0004137">
    <property type="term" value="F:deoxycytidine kinase activity"/>
    <property type="evidence" value="ECO:0000318"/>
    <property type="project" value="GO_Central"/>
</dbReference>
<dbReference type="GO" id="GO:0004138">
    <property type="term" value="F:deoxyguanosine kinase activity"/>
    <property type="evidence" value="ECO:0007669"/>
    <property type="project" value="UniProtKB-EC"/>
</dbReference>
<dbReference type="GO" id="GO:0042803">
    <property type="term" value="F:protein homodimerization activity"/>
    <property type="evidence" value="ECO:0007669"/>
    <property type="project" value="Ensembl"/>
</dbReference>
<dbReference type="GO" id="GO:0106383">
    <property type="term" value="P:dAMP salvage"/>
    <property type="evidence" value="ECO:0007669"/>
    <property type="project" value="Ensembl"/>
</dbReference>
<dbReference type="GO" id="GO:0006220">
    <property type="term" value="P:pyrimidine nucleotide metabolic process"/>
    <property type="evidence" value="ECO:0000250"/>
    <property type="project" value="UniProtKB"/>
</dbReference>
<dbReference type="CDD" id="cd01673">
    <property type="entry name" value="dNK"/>
    <property type="match status" value="1"/>
</dbReference>
<dbReference type="FunFam" id="3.40.50.300:FF:000461">
    <property type="entry name" value="Deoxycytidine kinase"/>
    <property type="match status" value="1"/>
</dbReference>
<dbReference type="Gene3D" id="3.40.50.300">
    <property type="entry name" value="P-loop containing nucleotide triphosphate hydrolases"/>
    <property type="match status" value="1"/>
</dbReference>
<dbReference type="InterPro" id="IPR002624">
    <property type="entry name" value="DCK/DGK"/>
</dbReference>
<dbReference type="InterPro" id="IPR050566">
    <property type="entry name" value="Deoxyribonucleoside_kinase"/>
</dbReference>
<dbReference type="InterPro" id="IPR031314">
    <property type="entry name" value="DNK_dom"/>
</dbReference>
<dbReference type="InterPro" id="IPR027417">
    <property type="entry name" value="P-loop_NTPase"/>
</dbReference>
<dbReference type="PANTHER" id="PTHR10513:SF19">
    <property type="entry name" value="DEOXYCYTIDINE KINASE"/>
    <property type="match status" value="1"/>
</dbReference>
<dbReference type="PANTHER" id="PTHR10513">
    <property type="entry name" value="DEOXYNUCLEOSIDE KINASE"/>
    <property type="match status" value="1"/>
</dbReference>
<dbReference type="Pfam" id="PF01712">
    <property type="entry name" value="dNK"/>
    <property type="match status" value="1"/>
</dbReference>
<dbReference type="PIRSF" id="PIRSF000705">
    <property type="entry name" value="DNK"/>
    <property type="match status" value="1"/>
</dbReference>
<dbReference type="SUPFAM" id="SSF52540">
    <property type="entry name" value="P-loop containing nucleoside triphosphate hydrolases"/>
    <property type="match status" value="1"/>
</dbReference>
<reference key="1">
    <citation type="submission" date="2005-09" db="EMBL/GenBank/DDBJ databases">
        <authorList>
            <consortium name="NIH - Mammalian Gene Collection (MGC) project"/>
        </authorList>
    </citation>
    <scope>NUCLEOTIDE SEQUENCE [LARGE SCALE MRNA]</scope>
    <source>
        <strain>Crossbred X Angus</strain>
        <tissue>Ileum</tissue>
    </source>
</reference>
<keyword id="KW-0067">ATP-binding</keyword>
<keyword id="KW-0418">Kinase</keyword>
<keyword id="KW-0547">Nucleotide-binding</keyword>
<keyword id="KW-0539">Nucleus</keyword>
<keyword id="KW-0597">Phosphoprotein</keyword>
<keyword id="KW-1185">Reference proteome</keyword>
<keyword id="KW-0808">Transferase</keyword>
<name>DCK_BOVIN</name>
<comment type="function">
    <text evidence="2">Phosphorylates the deoxyribonucleosides deoxycytidine, deoxyguanosine and deoxyadenosine.</text>
</comment>
<comment type="catalytic activity">
    <reaction evidence="2">
        <text>2'-deoxycytidine + a ribonucleoside 5'-triphosphate = dCMP + a ribonucleoside 5'-diphosphate + H(+)</text>
        <dbReference type="Rhea" id="RHEA:20061"/>
        <dbReference type="ChEBI" id="CHEBI:15378"/>
        <dbReference type="ChEBI" id="CHEBI:15698"/>
        <dbReference type="ChEBI" id="CHEBI:57566"/>
        <dbReference type="ChEBI" id="CHEBI:57930"/>
        <dbReference type="ChEBI" id="CHEBI:61557"/>
        <dbReference type="EC" id="2.7.1.74"/>
    </reaction>
</comment>
<comment type="catalytic activity">
    <reaction evidence="2">
        <text>2'-deoxyadenosine + ATP = dAMP + ADP + H(+)</text>
        <dbReference type="Rhea" id="RHEA:23452"/>
        <dbReference type="ChEBI" id="CHEBI:15378"/>
        <dbReference type="ChEBI" id="CHEBI:17256"/>
        <dbReference type="ChEBI" id="CHEBI:30616"/>
        <dbReference type="ChEBI" id="CHEBI:58245"/>
        <dbReference type="ChEBI" id="CHEBI:456216"/>
        <dbReference type="EC" id="2.7.1.76"/>
    </reaction>
</comment>
<comment type="catalytic activity">
    <reaction evidence="2">
        <text>2'-deoxyguanosine + ATP = dGMP + ADP + H(+)</text>
        <dbReference type="Rhea" id="RHEA:19201"/>
        <dbReference type="ChEBI" id="CHEBI:15378"/>
        <dbReference type="ChEBI" id="CHEBI:17172"/>
        <dbReference type="ChEBI" id="CHEBI:30616"/>
        <dbReference type="ChEBI" id="CHEBI:57673"/>
        <dbReference type="ChEBI" id="CHEBI:456216"/>
        <dbReference type="EC" id="2.7.1.113"/>
    </reaction>
</comment>
<comment type="subunit">
    <text evidence="2">Homodimer.</text>
</comment>
<comment type="subcellular location">
    <subcellularLocation>
        <location evidence="2">Nucleus</location>
    </subcellularLocation>
</comment>
<comment type="PTM">
    <text evidence="2">Phosphorylated and activated in vitro upon phosphorylation at Ser-74 by CSNK1D/CK1.</text>
</comment>
<comment type="similarity">
    <text evidence="4">Belongs to the DCK/DGK family.</text>
</comment>
<gene>
    <name type="primary">DCK</name>
</gene>
<proteinExistence type="evidence at transcript level"/>
<sequence>MATPPKRSCPSPAASSEGTRIKKISIEGNIAAGKSTFVNILKQVCEDWEVVPEPVARWCNVQSTQDEFEELTTSQKSGGNVLQMMYEKPERWSFTFQSYACLSRIRAQLAALNGKLKDAEKPVLFFERSVYSDRYIFASNLYESDCMNETEWTIYQDWHDWMNNQFGQSLELDGIIYLRATPEKCLNRIYLRGRNEEQGIPLEYLEKLHYKHESWLLHRTLKTNFDYLQEVPILTLDVNEDFKDKHDSLIEKVKDFLSTL</sequence>
<protein>
    <recommendedName>
        <fullName>Deoxycytidine kinase</fullName>
        <shortName>dCK</shortName>
        <ecNumber evidence="2">2.7.1.74</ecNumber>
    </recommendedName>
    <alternativeName>
        <fullName>Deoxyadenosine kinase</fullName>
        <ecNumber evidence="2">2.7.1.76</ecNumber>
    </alternativeName>
    <alternativeName>
        <fullName>Deoxyguanosine kinase</fullName>
        <ecNumber evidence="2">2.7.1.113</ecNumber>
    </alternativeName>
</protein>
<evidence type="ECO:0000250" key="1"/>
<evidence type="ECO:0000250" key="2">
    <source>
        <dbReference type="UniProtKB" id="P27707"/>
    </source>
</evidence>
<evidence type="ECO:0000255" key="3"/>
<evidence type="ECO:0000305" key="4"/>
<organism>
    <name type="scientific">Bos taurus</name>
    <name type="common">Bovine</name>
    <dbReference type="NCBI Taxonomy" id="9913"/>
    <lineage>
        <taxon>Eukaryota</taxon>
        <taxon>Metazoa</taxon>
        <taxon>Chordata</taxon>
        <taxon>Craniata</taxon>
        <taxon>Vertebrata</taxon>
        <taxon>Euteleostomi</taxon>
        <taxon>Mammalia</taxon>
        <taxon>Eutheria</taxon>
        <taxon>Laurasiatheria</taxon>
        <taxon>Artiodactyla</taxon>
        <taxon>Ruminantia</taxon>
        <taxon>Pecora</taxon>
        <taxon>Bovidae</taxon>
        <taxon>Bovinae</taxon>
        <taxon>Bos</taxon>
    </lineage>
</organism>